<name>ACCA_VIBC3</name>
<sequence length="319" mass="35620">MSLNFLDFEKPIVELETKIQALRDVSRHSTSASVDLDKELEQLEKKSLELKKKIFSDLGAWQVAQLARHPQRPYTLDYLKHIFTEFDELAGDRAYADDKAIVGGIARLEGRSVMVIGHQKGRETREKVKRNFGMPKPEGYRKALRLMEMAERFNMPIITFIDTAGAYPGVGAEERGQSEAIAKNLKVMSGLKVPVICNVVGEGGSGGALAIGVGDYVNMLQYSTYSVISPEGCASILWRDSDKAPQAAEAMGLIAPRLKELELIDEIIEEPLGGAHRDHKQTAENVKATLLRQLADLDALDHENLLERRYQRLMNYGYC</sequence>
<accession>A5F624</accession>
<accession>C3M3K1</accession>
<gene>
    <name evidence="1" type="primary">accA</name>
    <name type="ordered locus">VC0395_A1835</name>
    <name type="ordered locus">VC395_2360</name>
</gene>
<reference key="1">
    <citation type="submission" date="2007-03" db="EMBL/GenBank/DDBJ databases">
        <authorList>
            <person name="Heidelberg J."/>
        </authorList>
    </citation>
    <scope>NUCLEOTIDE SEQUENCE [LARGE SCALE GENOMIC DNA]</scope>
    <source>
        <strain>ATCC 39541 / Classical Ogawa 395 / O395</strain>
    </source>
</reference>
<reference key="2">
    <citation type="journal article" date="2008" name="PLoS ONE">
        <title>A recalibrated molecular clock and independent origins for the cholera pandemic clones.</title>
        <authorList>
            <person name="Feng L."/>
            <person name="Reeves P.R."/>
            <person name="Lan R."/>
            <person name="Ren Y."/>
            <person name="Gao C."/>
            <person name="Zhou Z."/>
            <person name="Ren Y."/>
            <person name="Cheng J."/>
            <person name="Wang W."/>
            <person name="Wang J."/>
            <person name="Qian W."/>
            <person name="Li D."/>
            <person name="Wang L."/>
        </authorList>
    </citation>
    <scope>NUCLEOTIDE SEQUENCE [LARGE SCALE GENOMIC DNA]</scope>
    <source>
        <strain>ATCC 39541 / Classical Ogawa 395 / O395</strain>
    </source>
</reference>
<evidence type="ECO:0000255" key="1">
    <source>
        <dbReference type="HAMAP-Rule" id="MF_00823"/>
    </source>
</evidence>
<evidence type="ECO:0000255" key="2">
    <source>
        <dbReference type="PROSITE-ProRule" id="PRU01137"/>
    </source>
</evidence>
<comment type="function">
    <text evidence="1">Component of the acetyl coenzyme A carboxylase (ACC) complex. First, biotin carboxylase catalyzes the carboxylation of biotin on its carrier protein (BCCP) and then the CO(2) group is transferred by the carboxyltransferase to acetyl-CoA to form malonyl-CoA.</text>
</comment>
<comment type="catalytic activity">
    <reaction evidence="1">
        <text>N(6)-carboxybiotinyl-L-lysyl-[protein] + acetyl-CoA = N(6)-biotinyl-L-lysyl-[protein] + malonyl-CoA</text>
        <dbReference type="Rhea" id="RHEA:54728"/>
        <dbReference type="Rhea" id="RHEA-COMP:10505"/>
        <dbReference type="Rhea" id="RHEA-COMP:10506"/>
        <dbReference type="ChEBI" id="CHEBI:57288"/>
        <dbReference type="ChEBI" id="CHEBI:57384"/>
        <dbReference type="ChEBI" id="CHEBI:83144"/>
        <dbReference type="ChEBI" id="CHEBI:83145"/>
        <dbReference type="EC" id="2.1.3.15"/>
    </reaction>
</comment>
<comment type="pathway">
    <text evidence="1">Lipid metabolism; malonyl-CoA biosynthesis; malonyl-CoA from acetyl-CoA: step 1/1.</text>
</comment>
<comment type="subunit">
    <text evidence="1">Acetyl-CoA carboxylase is a heterohexamer composed of biotin carboxyl carrier protein (AccB), biotin carboxylase (AccC) and two subunits each of ACCase subunit alpha (AccA) and ACCase subunit beta (AccD).</text>
</comment>
<comment type="subcellular location">
    <subcellularLocation>
        <location evidence="1">Cytoplasm</location>
    </subcellularLocation>
</comment>
<comment type="similarity">
    <text evidence="1">Belongs to the AccA family.</text>
</comment>
<feature type="chain" id="PRO_1000072887" description="Acetyl-coenzyme A carboxylase carboxyl transferase subunit alpha">
    <location>
        <begin position="1"/>
        <end position="319"/>
    </location>
</feature>
<feature type="domain" description="CoA carboxyltransferase C-terminal" evidence="2">
    <location>
        <begin position="35"/>
        <end position="296"/>
    </location>
</feature>
<dbReference type="EC" id="2.1.3.15" evidence="1"/>
<dbReference type="EMBL" id="CP000627">
    <property type="protein sequence ID" value="ABQ21210.1"/>
    <property type="molecule type" value="Genomic_DNA"/>
</dbReference>
<dbReference type="EMBL" id="CP001235">
    <property type="protein sequence ID" value="ACP10350.1"/>
    <property type="molecule type" value="Genomic_DNA"/>
</dbReference>
<dbReference type="RefSeq" id="WP_000055726.1">
    <property type="nucleotide sequence ID" value="NZ_JAACZH010000022.1"/>
</dbReference>
<dbReference type="SMR" id="A5F624"/>
<dbReference type="GeneID" id="69719131"/>
<dbReference type="KEGG" id="vco:VC0395_A1835"/>
<dbReference type="KEGG" id="vcr:VC395_2360"/>
<dbReference type="PATRIC" id="fig|345073.21.peg.2275"/>
<dbReference type="eggNOG" id="COG0825">
    <property type="taxonomic scope" value="Bacteria"/>
</dbReference>
<dbReference type="HOGENOM" id="CLU_015486_0_2_6"/>
<dbReference type="OrthoDB" id="9808023at2"/>
<dbReference type="UniPathway" id="UPA00655">
    <property type="reaction ID" value="UER00711"/>
</dbReference>
<dbReference type="Proteomes" id="UP000000249">
    <property type="component" value="Chromosome 2"/>
</dbReference>
<dbReference type="GO" id="GO:0009317">
    <property type="term" value="C:acetyl-CoA carboxylase complex"/>
    <property type="evidence" value="ECO:0007669"/>
    <property type="project" value="InterPro"/>
</dbReference>
<dbReference type="GO" id="GO:0003989">
    <property type="term" value="F:acetyl-CoA carboxylase activity"/>
    <property type="evidence" value="ECO:0007669"/>
    <property type="project" value="InterPro"/>
</dbReference>
<dbReference type="GO" id="GO:0005524">
    <property type="term" value="F:ATP binding"/>
    <property type="evidence" value="ECO:0007669"/>
    <property type="project" value="UniProtKB-KW"/>
</dbReference>
<dbReference type="GO" id="GO:0016743">
    <property type="term" value="F:carboxyl- or carbamoyltransferase activity"/>
    <property type="evidence" value="ECO:0007669"/>
    <property type="project" value="UniProtKB-UniRule"/>
</dbReference>
<dbReference type="GO" id="GO:0006633">
    <property type="term" value="P:fatty acid biosynthetic process"/>
    <property type="evidence" value="ECO:0007669"/>
    <property type="project" value="UniProtKB-KW"/>
</dbReference>
<dbReference type="GO" id="GO:2001295">
    <property type="term" value="P:malonyl-CoA biosynthetic process"/>
    <property type="evidence" value="ECO:0007669"/>
    <property type="project" value="UniProtKB-UniRule"/>
</dbReference>
<dbReference type="FunFam" id="3.90.226.10:FF:000008">
    <property type="entry name" value="Acetyl-coenzyme A carboxylase carboxyl transferase subunit alpha"/>
    <property type="match status" value="1"/>
</dbReference>
<dbReference type="Gene3D" id="3.90.226.10">
    <property type="entry name" value="2-enoyl-CoA Hydratase, Chain A, domain 1"/>
    <property type="match status" value="1"/>
</dbReference>
<dbReference type="HAMAP" id="MF_00823">
    <property type="entry name" value="AcetylCoA_CT_alpha"/>
    <property type="match status" value="1"/>
</dbReference>
<dbReference type="InterPro" id="IPR001095">
    <property type="entry name" value="Acetyl_CoA_COase_a_su"/>
</dbReference>
<dbReference type="InterPro" id="IPR029045">
    <property type="entry name" value="ClpP/crotonase-like_dom_sf"/>
</dbReference>
<dbReference type="InterPro" id="IPR011763">
    <property type="entry name" value="COA_CT_C"/>
</dbReference>
<dbReference type="NCBIfam" id="TIGR00513">
    <property type="entry name" value="accA"/>
    <property type="match status" value="1"/>
</dbReference>
<dbReference type="NCBIfam" id="NF041504">
    <property type="entry name" value="AccA_sub"/>
    <property type="match status" value="1"/>
</dbReference>
<dbReference type="NCBIfam" id="NF004344">
    <property type="entry name" value="PRK05724.1"/>
    <property type="match status" value="1"/>
</dbReference>
<dbReference type="PANTHER" id="PTHR42853">
    <property type="entry name" value="ACETYL-COENZYME A CARBOXYLASE CARBOXYL TRANSFERASE SUBUNIT ALPHA"/>
    <property type="match status" value="1"/>
</dbReference>
<dbReference type="PANTHER" id="PTHR42853:SF3">
    <property type="entry name" value="ACETYL-COENZYME A CARBOXYLASE CARBOXYL TRANSFERASE SUBUNIT ALPHA, CHLOROPLASTIC"/>
    <property type="match status" value="1"/>
</dbReference>
<dbReference type="Pfam" id="PF03255">
    <property type="entry name" value="ACCA"/>
    <property type="match status" value="1"/>
</dbReference>
<dbReference type="PRINTS" id="PR01069">
    <property type="entry name" value="ACCCTRFRASEA"/>
</dbReference>
<dbReference type="SUPFAM" id="SSF52096">
    <property type="entry name" value="ClpP/crotonase"/>
    <property type="match status" value="1"/>
</dbReference>
<dbReference type="PROSITE" id="PS50989">
    <property type="entry name" value="COA_CT_CTER"/>
    <property type="match status" value="1"/>
</dbReference>
<organism>
    <name type="scientific">Vibrio cholerae serotype O1 (strain ATCC 39541 / Classical Ogawa 395 / O395)</name>
    <dbReference type="NCBI Taxonomy" id="345073"/>
    <lineage>
        <taxon>Bacteria</taxon>
        <taxon>Pseudomonadati</taxon>
        <taxon>Pseudomonadota</taxon>
        <taxon>Gammaproteobacteria</taxon>
        <taxon>Vibrionales</taxon>
        <taxon>Vibrionaceae</taxon>
        <taxon>Vibrio</taxon>
    </lineage>
</organism>
<keyword id="KW-0067">ATP-binding</keyword>
<keyword id="KW-0963">Cytoplasm</keyword>
<keyword id="KW-0275">Fatty acid biosynthesis</keyword>
<keyword id="KW-0276">Fatty acid metabolism</keyword>
<keyword id="KW-0444">Lipid biosynthesis</keyword>
<keyword id="KW-0443">Lipid metabolism</keyword>
<keyword id="KW-0547">Nucleotide-binding</keyword>
<keyword id="KW-0808">Transferase</keyword>
<proteinExistence type="inferred from homology"/>
<protein>
    <recommendedName>
        <fullName evidence="1">Acetyl-coenzyme A carboxylase carboxyl transferase subunit alpha</fullName>
        <shortName evidence="1">ACCase subunit alpha</shortName>
        <shortName evidence="1">Acetyl-CoA carboxylase carboxyltransferase subunit alpha</shortName>
        <ecNumber evidence="1">2.1.3.15</ecNumber>
    </recommendedName>
</protein>